<name>ATPB_ACET2</name>
<accession>A3DIM9</accession>
<sequence>MATENVGTVVQIIGPVIDIRFERGKLPSIYNAIKINSEGIDIVAEVMQYTGNDTVRCVSMNSTDGLKRGMKAVDTGEPIKVPVGKEVLGRVFNVLGEPIDGKGDVKATTYLPIHREAPGLDEQKPVTEILETGIKVIDLLAPYAKGGKIGLFGGAGVGKTVLIMELIRNIATEHGGYSVFTGVGERSREGNDLWNEMNESGVIEKTALVFGQMNEPPGSRMRVGLTGLTMAEYFRDELGQDVLLFIDNIFRFIQAGSEVSALLGRIPSAVGYQPTLATEMGALQERITSTKKGSITSVQAVYVPADDLTDPAPATTFTHLDATTVLSRHIVEQGIYPAVDPLDSTSRVLDRRIVGDEHYTVARKVQEILQRYKELQDIIAILGLDELSEEDKLIVFRARKIQRFLSQPFFVAEAYTGYKGKFVRIKDTIRGFKEIIEGKMDDIPEAAFYMAGTIDEVYERAKKM</sequence>
<reference key="1">
    <citation type="submission" date="2007-02" db="EMBL/GenBank/DDBJ databases">
        <title>Complete sequence of Clostridium thermocellum ATCC 27405.</title>
        <authorList>
            <consortium name="US DOE Joint Genome Institute"/>
            <person name="Copeland A."/>
            <person name="Lucas S."/>
            <person name="Lapidus A."/>
            <person name="Barry K."/>
            <person name="Detter J.C."/>
            <person name="Glavina del Rio T."/>
            <person name="Hammon N."/>
            <person name="Israni S."/>
            <person name="Dalin E."/>
            <person name="Tice H."/>
            <person name="Pitluck S."/>
            <person name="Chertkov O."/>
            <person name="Brettin T."/>
            <person name="Bruce D."/>
            <person name="Han C."/>
            <person name="Tapia R."/>
            <person name="Gilna P."/>
            <person name="Schmutz J."/>
            <person name="Larimer F."/>
            <person name="Land M."/>
            <person name="Hauser L."/>
            <person name="Kyrpides N."/>
            <person name="Mikhailova N."/>
            <person name="Wu J.H.D."/>
            <person name="Newcomb M."/>
            <person name="Richardson P."/>
        </authorList>
    </citation>
    <scope>NUCLEOTIDE SEQUENCE [LARGE SCALE GENOMIC DNA]</scope>
    <source>
        <strain>ATCC 27405 / DSM 1237 / JCM 9322 / NBRC 103400 / NCIMB 10682 / NRRL B-4536 / VPI 7372</strain>
    </source>
</reference>
<protein>
    <recommendedName>
        <fullName evidence="1">ATP synthase subunit beta</fullName>
        <ecNumber evidence="1">7.1.2.2</ecNumber>
    </recommendedName>
    <alternativeName>
        <fullName evidence="1">ATP synthase F1 sector subunit beta</fullName>
    </alternativeName>
    <alternativeName>
        <fullName evidence="1">F-ATPase subunit beta</fullName>
    </alternativeName>
</protein>
<feature type="chain" id="PRO_1000073365" description="ATP synthase subunit beta">
    <location>
        <begin position="1"/>
        <end position="464"/>
    </location>
</feature>
<feature type="binding site" evidence="1">
    <location>
        <begin position="153"/>
        <end position="160"/>
    </location>
    <ligand>
        <name>ATP</name>
        <dbReference type="ChEBI" id="CHEBI:30616"/>
    </ligand>
</feature>
<organism>
    <name type="scientific">Acetivibrio thermocellus (strain ATCC 27405 / DSM 1237 / JCM 9322 / NBRC 103400 / NCIMB 10682 / NRRL B-4536 / VPI 7372)</name>
    <name type="common">Clostridium thermocellum</name>
    <dbReference type="NCBI Taxonomy" id="203119"/>
    <lineage>
        <taxon>Bacteria</taxon>
        <taxon>Bacillati</taxon>
        <taxon>Bacillota</taxon>
        <taxon>Clostridia</taxon>
        <taxon>Eubacteriales</taxon>
        <taxon>Oscillospiraceae</taxon>
        <taxon>Acetivibrio</taxon>
    </lineage>
</organism>
<proteinExistence type="inferred from homology"/>
<keyword id="KW-0066">ATP synthesis</keyword>
<keyword id="KW-0067">ATP-binding</keyword>
<keyword id="KW-1003">Cell membrane</keyword>
<keyword id="KW-0139">CF(1)</keyword>
<keyword id="KW-0375">Hydrogen ion transport</keyword>
<keyword id="KW-0406">Ion transport</keyword>
<keyword id="KW-0472">Membrane</keyword>
<keyword id="KW-0547">Nucleotide-binding</keyword>
<keyword id="KW-1185">Reference proteome</keyword>
<keyword id="KW-1278">Translocase</keyword>
<keyword id="KW-0813">Transport</keyword>
<evidence type="ECO:0000255" key="1">
    <source>
        <dbReference type="HAMAP-Rule" id="MF_01347"/>
    </source>
</evidence>
<comment type="function">
    <text evidence="1">Produces ATP from ADP in the presence of a proton gradient across the membrane. The catalytic sites are hosted primarily by the beta subunits.</text>
</comment>
<comment type="catalytic activity">
    <reaction evidence="1">
        <text>ATP + H2O + 4 H(+)(in) = ADP + phosphate + 5 H(+)(out)</text>
        <dbReference type="Rhea" id="RHEA:57720"/>
        <dbReference type="ChEBI" id="CHEBI:15377"/>
        <dbReference type="ChEBI" id="CHEBI:15378"/>
        <dbReference type="ChEBI" id="CHEBI:30616"/>
        <dbReference type="ChEBI" id="CHEBI:43474"/>
        <dbReference type="ChEBI" id="CHEBI:456216"/>
        <dbReference type="EC" id="7.1.2.2"/>
    </reaction>
</comment>
<comment type="subunit">
    <text evidence="1">F-type ATPases have 2 components, CF(1) - the catalytic core - and CF(0) - the membrane proton channel. CF(1) has five subunits: alpha(3), beta(3), gamma(1), delta(1), epsilon(1). CF(0) has three main subunits: a(1), b(2) and c(9-12). The alpha and beta chains form an alternating ring which encloses part of the gamma chain. CF(1) is attached to CF(0) by a central stalk formed by the gamma and epsilon chains, while a peripheral stalk is formed by the delta and b chains.</text>
</comment>
<comment type="subcellular location">
    <subcellularLocation>
        <location evidence="1">Cell membrane</location>
        <topology evidence="1">Peripheral membrane protein</topology>
    </subcellularLocation>
</comment>
<comment type="similarity">
    <text evidence="1">Belongs to the ATPase alpha/beta chains family.</text>
</comment>
<dbReference type="EC" id="7.1.2.2" evidence="1"/>
<dbReference type="EMBL" id="CP000568">
    <property type="protein sequence ID" value="ABN53808.1"/>
    <property type="molecule type" value="Genomic_DNA"/>
</dbReference>
<dbReference type="RefSeq" id="WP_003515456.1">
    <property type="nucleotide sequence ID" value="NC_009012.1"/>
</dbReference>
<dbReference type="SMR" id="A3DIM9"/>
<dbReference type="STRING" id="203119.Cthe_2608"/>
<dbReference type="GeneID" id="35803939"/>
<dbReference type="KEGG" id="cth:Cthe_2608"/>
<dbReference type="eggNOG" id="COG0055">
    <property type="taxonomic scope" value="Bacteria"/>
</dbReference>
<dbReference type="HOGENOM" id="CLU_022398_0_2_9"/>
<dbReference type="OrthoDB" id="9801639at2"/>
<dbReference type="Proteomes" id="UP000002145">
    <property type="component" value="Chromosome"/>
</dbReference>
<dbReference type="GO" id="GO:0005886">
    <property type="term" value="C:plasma membrane"/>
    <property type="evidence" value="ECO:0007669"/>
    <property type="project" value="UniProtKB-SubCell"/>
</dbReference>
<dbReference type="GO" id="GO:0045259">
    <property type="term" value="C:proton-transporting ATP synthase complex"/>
    <property type="evidence" value="ECO:0007669"/>
    <property type="project" value="UniProtKB-KW"/>
</dbReference>
<dbReference type="GO" id="GO:0005524">
    <property type="term" value="F:ATP binding"/>
    <property type="evidence" value="ECO:0007669"/>
    <property type="project" value="UniProtKB-UniRule"/>
</dbReference>
<dbReference type="GO" id="GO:0016887">
    <property type="term" value="F:ATP hydrolysis activity"/>
    <property type="evidence" value="ECO:0007669"/>
    <property type="project" value="InterPro"/>
</dbReference>
<dbReference type="GO" id="GO:0046933">
    <property type="term" value="F:proton-transporting ATP synthase activity, rotational mechanism"/>
    <property type="evidence" value="ECO:0007669"/>
    <property type="project" value="UniProtKB-UniRule"/>
</dbReference>
<dbReference type="CDD" id="cd18110">
    <property type="entry name" value="ATP-synt_F1_beta_C"/>
    <property type="match status" value="1"/>
</dbReference>
<dbReference type="CDD" id="cd18115">
    <property type="entry name" value="ATP-synt_F1_beta_N"/>
    <property type="match status" value="1"/>
</dbReference>
<dbReference type="CDD" id="cd01133">
    <property type="entry name" value="F1-ATPase_beta_CD"/>
    <property type="match status" value="1"/>
</dbReference>
<dbReference type="FunFam" id="1.10.1140.10:FF:000001">
    <property type="entry name" value="ATP synthase subunit beta"/>
    <property type="match status" value="1"/>
</dbReference>
<dbReference type="FunFam" id="3.40.50.300:FF:000026">
    <property type="entry name" value="ATP synthase subunit beta"/>
    <property type="match status" value="1"/>
</dbReference>
<dbReference type="Gene3D" id="2.40.10.170">
    <property type="match status" value="1"/>
</dbReference>
<dbReference type="Gene3D" id="1.10.1140.10">
    <property type="entry name" value="Bovine Mitochondrial F1-atpase, Atp Synthase Beta Chain, Chain D, domain 3"/>
    <property type="match status" value="1"/>
</dbReference>
<dbReference type="Gene3D" id="3.40.50.300">
    <property type="entry name" value="P-loop containing nucleotide triphosphate hydrolases"/>
    <property type="match status" value="1"/>
</dbReference>
<dbReference type="HAMAP" id="MF_01347">
    <property type="entry name" value="ATP_synth_beta_bact"/>
    <property type="match status" value="1"/>
</dbReference>
<dbReference type="InterPro" id="IPR003593">
    <property type="entry name" value="AAA+_ATPase"/>
</dbReference>
<dbReference type="InterPro" id="IPR055190">
    <property type="entry name" value="ATP-synt_VA_C"/>
</dbReference>
<dbReference type="InterPro" id="IPR005722">
    <property type="entry name" value="ATP_synth_F1_bsu"/>
</dbReference>
<dbReference type="InterPro" id="IPR020003">
    <property type="entry name" value="ATPase_a/bsu_AS"/>
</dbReference>
<dbReference type="InterPro" id="IPR050053">
    <property type="entry name" value="ATPase_alpha/beta_chains"/>
</dbReference>
<dbReference type="InterPro" id="IPR004100">
    <property type="entry name" value="ATPase_F1/V1/A1_a/bsu_N"/>
</dbReference>
<dbReference type="InterPro" id="IPR036121">
    <property type="entry name" value="ATPase_F1/V1/A1_a/bsu_N_sf"/>
</dbReference>
<dbReference type="InterPro" id="IPR000194">
    <property type="entry name" value="ATPase_F1/V1/A1_a/bsu_nucl-bd"/>
</dbReference>
<dbReference type="InterPro" id="IPR024034">
    <property type="entry name" value="ATPase_F1/V1_b/a_C"/>
</dbReference>
<dbReference type="InterPro" id="IPR027417">
    <property type="entry name" value="P-loop_NTPase"/>
</dbReference>
<dbReference type="NCBIfam" id="TIGR01039">
    <property type="entry name" value="atpD"/>
    <property type="match status" value="1"/>
</dbReference>
<dbReference type="PANTHER" id="PTHR15184">
    <property type="entry name" value="ATP SYNTHASE"/>
    <property type="match status" value="1"/>
</dbReference>
<dbReference type="PANTHER" id="PTHR15184:SF71">
    <property type="entry name" value="ATP SYNTHASE SUBUNIT BETA, MITOCHONDRIAL"/>
    <property type="match status" value="1"/>
</dbReference>
<dbReference type="Pfam" id="PF00006">
    <property type="entry name" value="ATP-synt_ab"/>
    <property type="match status" value="1"/>
</dbReference>
<dbReference type="Pfam" id="PF02874">
    <property type="entry name" value="ATP-synt_ab_N"/>
    <property type="match status" value="1"/>
</dbReference>
<dbReference type="Pfam" id="PF22919">
    <property type="entry name" value="ATP-synt_VA_C"/>
    <property type="match status" value="1"/>
</dbReference>
<dbReference type="SMART" id="SM00382">
    <property type="entry name" value="AAA"/>
    <property type="match status" value="1"/>
</dbReference>
<dbReference type="SUPFAM" id="SSF47917">
    <property type="entry name" value="C-terminal domain of alpha and beta subunits of F1 ATP synthase"/>
    <property type="match status" value="1"/>
</dbReference>
<dbReference type="SUPFAM" id="SSF50615">
    <property type="entry name" value="N-terminal domain of alpha and beta subunits of F1 ATP synthase"/>
    <property type="match status" value="1"/>
</dbReference>
<dbReference type="SUPFAM" id="SSF52540">
    <property type="entry name" value="P-loop containing nucleoside triphosphate hydrolases"/>
    <property type="match status" value="1"/>
</dbReference>
<dbReference type="PROSITE" id="PS00152">
    <property type="entry name" value="ATPASE_ALPHA_BETA"/>
    <property type="match status" value="1"/>
</dbReference>
<gene>
    <name evidence="1" type="primary">atpD</name>
    <name type="ordered locus">Cthe_2608</name>
</gene>